<feature type="chain" id="PRO_1000085080" description="Phosphatidylglycerol--prolipoprotein diacylglyceryl transferase">
    <location>
        <begin position="1"/>
        <end position="261"/>
    </location>
</feature>
<feature type="transmembrane region" description="Helical" evidence="1">
    <location>
        <begin position="17"/>
        <end position="37"/>
    </location>
</feature>
<feature type="transmembrane region" description="Helical" evidence="1">
    <location>
        <begin position="59"/>
        <end position="79"/>
    </location>
</feature>
<feature type="transmembrane region" description="Helical" evidence="1">
    <location>
        <begin position="94"/>
        <end position="114"/>
    </location>
</feature>
<feature type="transmembrane region" description="Helical" evidence="1">
    <location>
        <begin position="121"/>
        <end position="141"/>
    </location>
</feature>
<feature type="transmembrane region" description="Helical" evidence="1">
    <location>
        <begin position="174"/>
        <end position="194"/>
    </location>
</feature>
<feature type="transmembrane region" description="Helical" evidence="1">
    <location>
        <begin position="228"/>
        <end position="248"/>
    </location>
</feature>
<feature type="binding site" evidence="1">
    <location>
        <position position="142"/>
    </location>
    <ligand>
        <name>a 1,2-diacyl-sn-glycero-3-phospho-(1'-sn-glycerol)</name>
        <dbReference type="ChEBI" id="CHEBI:64716"/>
    </ligand>
</feature>
<comment type="function">
    <text evidence="1">Catalyzes the transfer of the diacylglyceryl group from phosphatidylglycerol to the sulfhydryl group of the N-terminal cysteine of a prolipoprotein, the first step in the formation of mature lipoproteins.</text>
</comment>
<comment type="catalytic activity">
    <reaction evidence="1">
        <text>L-cysteinyl-[prolipoprotein] + a 1,2-diacyl-sn-glycero-3-phospho-(1'-sn-glycerol) = an S-1,2-diacyl-sn-glyceryl-L-cysteinyl-[prolipoprotein] + sn-glycerol 1-phosphate + H(+)</text>
        <dbReference type="Rhea" id="RHEA:56712"/>
        <dbReference type="Rhea" id="RHEA-COMP:14679"/>
        <dbReference type="Rhea" id="RHEA-COMP:14680"/>
        <dbReference type="ChEBI" id="CHEBI:15378"/>
        <dbReference type="ChEBI" id="CHEBI:29950"/>
        <dbReference type="ChEBI" id="CHEBI:57685"/>
        <dbReference type="ChEBI" id="CHEBI:64716"/>
        <dbReference type="ChEBI" id="CHEBI:140658"/>
        <dbReference type="EC" id="2.5.1.145"/>
    </reaction>
</comment>
<comment type="pathway">
    <text evidence="1">Protein modification; lipoprotein biosynthesis (diacylglyceryl transfer).</text>
</comment>
<comment type="subcellular location">
    <subcellularLocation>
        <location evidence="1">Cell inner membrane</location>
        <topology evidence="1">Multi-pass membrane protein</topology>
    </subcellularLocation>
</comment>
<comment type="similarity">
    <text evidence="1">Belongs to the Lgt family.</text>
</comment>
<evidence type="ECO:0000255" key="1">
    <source>
        <dbReference type="HAMAP-Rule" id="MF_01147"/>
    </source>
</evidence>
<proteinExistence type="inferred from homology"/>
<accession>A4SWH9</accession>
<sequence>MLIHPQFDPAAIRFGSFAIHWYGVMYLLAFAQFLLLGRLRIRAPRYQTLGWTYKDLEDLLFAGVLGVVLGGRLGYTLFYMPGYYLANPLSILKIWEGGMSFHGGLLGVLCALLWFAKKRHTSFFVVSDLVAPLIPFGLAFGRLGNFINGELWGRPTDLPWAMIFPMVDSIPRHPSQIYQLLGEGIFLGIVLWIYSSKPRPIGRVSGLFLLGYGICRFLAEFAREPDAFLGLLGLGLSMGQWLCVPMIILGVYLLRRNSTDT</sequence>
<dbReference type="EC" id="2.5.1.145" evidence="1"/>
<dbReference type="EMBL" id="CP000655">
    <property type="protein sequence ID" value="ABP33843.1"/>
    <property type="molecule type" value="Genomic_DNA"/>
</dbReference>
<dbReference type="RefSeq" id="WP_011902468.1">
    <property type="nucleotide sequence ID" value="NC_009379.1"/>
</dbReference>
<dbReference type="SMR" id="A4SWH9"/>
<dbReference type="GeneID" id="31480983"/>
<dbReference type="KEGG" id="pnu:Pnuc_0625"/>
<dbReference type="eggNOG" id="COG0682">
    <property type="taxonomic scope" value="Bacteria"/>
</dbReference>
<dbReference type="HOGENOM" id="CLU_013386_1_0_4"/>
<dbReference type="UniPathway" id="UPA00664"/>
<dbReference type="Proteomes" id="UP000000231">
    <property type="component" value="Chromosome"/>
</dbReference>
<dbReference type="GO" id="GO:0005886">
    <property type="term" value="C:plasma membrane"/>
    <property type="evidence" value="ECO:0007669"/>
    <property type="project" value="UniProtKB-SubCell"/>
</dbReference>
<dbReference type="GO" id="GO:0008961">
    <property type="term" value="F:phosphatidylglycerol-prolipoprotein diacylglyceryl transferase activity"/>
    <property type="evidence" value="ECO:0007669"/>
    <property type="project" value="UniProtKB-UniRule"/>
</dbReference>
<dbReference type="GO" id="GO:0042158">
    <property type="term" value="P:lipoprotein biosynthetic process"/>
    <property type="evidence" value="ECO:0007669"/>
    <property type="project" value="UniProtKB-UniRule"/>
</dbReference>
<dbReference type="HAMAP" id="MF_01147">
    <property type="entry name" value="Lgt"/>
    <property type="match status" value="1"/>
</dbReference>
<dbReference type="InterPro" id="IPR001640">
    <property type="entry name" value="Lgt"/>
</dbReference>
<dbReference type="NCBIfam" id="TIGR00544">
    <property type="entry name" value="lgt"/>
    <property type="match status" value="1"/>
</dbReference>
<dbReference type="PANTHER" id="PTHR30589:SF0">
    <property type="entry name" value="PHOSPHATIDYLGLYCEROL--PROLIPOPROTEIN DIACYLGLYCERYL TRANSFERASE"/>
    <property type="match status" value="1"/>
</dbReference>
<dbReference type="PANTHER" id="PTHR30589">
    <property type="entry name" value="PROLIPOPROTEIN DIACYLGLYCERYL TRANSFERASE"/>
    <property type="match status" value="1"/>
</dbReference>
<dbReference type="Pfam" id="PF01790">
    <property type="entry name" value="LGT"/>
    <property type="match status" value="1"/>
</dbReference>
<dbReference type="PROSITE" id="PS01311">
    <property type="entry name" value="LGT"/>
    <property type="match status" value="1"/>
</dbReference>
<reference key="1">
    <citation type="journal article" date="2012" name="Stand. Genomic Sci.">
        <title>Complete genome sequence of Polynucleobacter necessarius subsp. asymbioticus type strain (QLW-P1DMWA-1(T)).</title>
        <authorList>
            <person name="Meincke L."/>
            <person name="Copeland A."/>
            <person name="Lapidus A."/>
            <person name="Lucas S."/>
            <person name="Berry K.W."/>
            <person name="Del Rio T.G."/>
            <person name="Hammon N."/>
            <person name="Dalin E."/>
            <person name="Tice H."/>
            <person name="Pitluck S."/>
            <person name="Richardson P."/>
            <person name="Bruce D."/>
            <person name="Goodwin L."/>
            <person name="Han C."/>
            <person name="Tapia R."/>
            <person name="Detter J.C."/>
            <person name="Schmutz J."/>
            <person name="Brettin T."/>
            <person name="Larimer F."/>
            <person name="Land M."/>
            <person name="Hauser L."/>
            <person name="Kyrpides N.C."/>
            <person name="Ivanova N."/>
            <person name="Goker M."/>
            <person name="Woyke T."/>
            <person name="Wu Q.L."/>
            <person name="Pockl M."/>
            <person name="Hahn M.W."/>
            <person name="Klenk H.P."/>
        </authorList>
    </citation>
    <scope>NUCLEOTIDE SEQUENCE [LARGE SCALE GENOMIC DNA]</scope>
    <source>
        <strain>DSM 18221 / CIP 109841 / QLW-P1DMWA-1</strain>
    </source>
</reference>
<gene>
    <name evidence="1" type="primary">lgt</name>
    <name type="ordered locus">Pnuc_0625</name>
</gene>
<organism>
    <name type="scientific">Polynucleobacter asymbioticus (strain DSM 18221 / CIP 109841 / QLW-P1DMWA-1)</name>
    <name type="common">Polynucleobacter necessarius subsp. asymbioticus</name>
    <dbReference type="NCBI Taxonomy" id="312153"/>
    <lineage>
        <taxon>Bacteria</taxon>
        <taxon>Pseudomonadati</taxon>
        <taxon>Pseudomonadota</taxon>
        <taxon>Betaproteobacteria</taxon>
        <taxon>Burkholderiales</taxon>
        <taxon>Burkholderiaceae</taxon>
        <taxon>Polynucleobacter</taxon>
    </lineage>
</organism>
<name>LGT_POLAQ</name>
<keyword id="KW-0997">Cell inner membrane</keyword>
<keyword id="KW-1003">Cell membrane</keyword>
<keyword id="KW-0472">Membrane</keyword>
<keyword id="KW-1185">Reference proteome</keyword>
<keyword id="KW-0808">Transferase</keyword>
<keyword id="KW-0812">Transmembrane</keyword>
<keyword id="KW-1133">Transmembrane helix</keyword>
<protein>
    <recommendedName>
        <fullName evidence="1">Phosphatidylglycerol--prolipoprotein diacylglyceryl transferase</fullName>
        <ecNumber evidence="1">2.5.1.145</ecNumber>
    </recommendedName>
</protein>